<gene>
    <name evidence="1" type="primary">katG1</name>
    <name type="ordered locus">Bamb_0616</name>
</gene>
<keyword id="KW-0349">Heme</keyword>
<keyword id="KW-0376">Hydrogen peroxide</keyword>
<keyword id="KW-0408">Iron</keyword>
<keyword id="KW-0479">Metal-binding</keyword>
<keyword id="KW-0560">Oxidoreductase</keyword>
<keyword id="KW-0575">Peroxidase</keyword>
<proteinExistence type="inferred from homology"/>
<dbReference type="EC" id="1.11.1.21" evidence="1"/>
<dbReference type="EMBL" id="CP000440">
    <property type="protein sequence ID" value="ABI86175.1"/>
    <property type="molecule type" value="Genomic_DNA"/>
</dbReference>
<dbReference type="RefSeq" id="WP_011656012.1">
    <property type="nucleotide sequence ID" value="NC_008390.1"/>
</dbReference>
<dbReference type="SMR" id="Q0BI48"/>
<dbReference type="PeroxiBase" id="2304">
    <property type="entry name" value="BamCP01_AMMD"/>
</dbReference>
<dbReference type="GeneID" id="93083970"/>
<dbReference type="KEGG" id="bam:Bamb_0616"/>
<dbReference type="PATRIC" id="fig|339670.21.peg.980"/>
<dbReference type="eggNOG" id="COG0376">
    <property type="taxonomic scope" value="Bacteria"/>
</dbReference>
<dbReference type="Proteomes" id="UP000000662">
    <property type="component" value="Chromosome 1"/>
</dbReference>
<dbReference type="GO" id="GO:0005829">
    <property type="term" value="C:cytosol"/>
    <property type="evidence" value="ECO:0007669"/>
    <property type="project" value="TreeGrafter"/>
</dbReference>
<dbReference type="GO" id="GO:0004096">
    <property type="term" value="F:catalase activity"/>
    <property type="evidence" value="ECO:0007669"/>
    <property type="project" value="UniProtKB-UniRule"/>
</dbReference>
<dbReference type="GO" id="GO:0020037">
    <property type="term" value="F:heme binding"/>
    <property type="evidence" value="ECO:0007669"/>
    <property type="project" value="InterPro"/>
</dbReference>
<dbReference type="GO" id="GO:0046872">
    <property type="term" value="F:metal ion binding"/>
    <property type="evidence" value="ECO:0007669"/>
    <property type="project" value="UniProtKB-KW"/>
</dbReference>
<dbReference type="GO" id="GO:0070301">
    <property type="term" value="P:cellular response to hydrogen peroxide"/>
    <property type="evidence" value="ECO:0007669"/>
    <property type="project" value="TreeGrafter"/>
</dbReference>
<dbReference type="GO" id="GO:0042744">
    <property type="term" value="P:hydrogen peroxide catabolic process"/>
    <property type="evidence" value="ECO:0007669"/>
    <property type="project" value="UniProtKB-KW"/>
</dbReference>
<dbReference type="CDD" id="cd00649">
    <property type="entry name" value="catalase_peroxidase_1"/>
    <property type="match status" value="1"/>
</dbReference>
<dbReference type="CDD" id="cd08200">
    <property type="entry name" value="catalase_peroxidase_2"/>
    <property type="match status" value="1"/>
</dbReference>
<dbReference type="FunFam" id="1.10.420.10:FF:000002">
    <property type="entry name" value="Catalase-peroxidase"/>
    <property type="match status" value="1"/>
</dbReference>
<dbReference type="FunFam" id="1.10.420.10:FF:000004">
    <property type="entry name" value="Catalase-peroxidase"/>
    <property type="match status" value="1"/>
</dbReference>
<dbReference type="FunFam" id="1.10.520.10:FF:000002">
    <property type="entry name" value="Catalase-peroxidase"/>
    <property type="match status" value="1"/>
</dbReference>
<dbReference type="FunFam" id="1.10.520.10:FF:000004">
    <property type="entry name" value="Catalase-peroxidase"/>
    <property type="match status" value="1"/>
</dbReference>
<dbReference type="Gene3D" id="1.10.520.10">
    <property type="match status" value="2"/>
</dbReference>
<dbReference type="Gene3D" id="1.10.420.10">
    <property type="entry name" value="Peroxidase, domain 2"/>
    <property type="match status" value="2"/>
</dbReference>
<dbReference type="HAMAP" id="MF_01961">
    <property type="entry name" value="Catal_peroxid"/>
    <property type="match status" value="1"/>
</dbReference>
<dbReference type="InterPro" id="IPR000763">
    <property type="entry name" value="Catalase_peroxidase"/>
</dbReference>
<dbReference type="InterPro" id="IPR002016">
    <property type="entry name" value="Haem_peroxidase"/>
</dbReference>
<dbReference type="InterPro" id="IPR010255">
    <property type="entry name" value="Haem_peroxidase_sf"/>
</dbReference>
<dbReference type="InterPro" id="IPR019794">
    <property type="entry name" value="Peroxidases_AS"/>
</dbReference>
<dbReference type="InterPro" id="IPR019793">
    <property type="entry name" value="Peroxidases_heam-ligand_BS"/>
</dbReference>
<dbReference type="NCBIfam" id="TIGR00198">
    <property type="entry name" value="cat_per_HPI"/>
    <property type="match status" value="1"/>
</dbReference>
<dbReference type="NCBIfam" id="NF011635">
    <property type="entry name" value="PRK15061.1"/>
    <property type="match status" value="1"/>
</dbReference>
<dbReference type="PANTHER" id="PTHR30555:SF0">
    <property type="entry name" value="CATALASE-PEROXIDASE"/>
    <property type="match status" value="1"/>
</dbReference>
<dbReference type="PANTHER" id="PTHR30555">
    <property type="entry name" value="HYDROPEROXIDASE I, BIFUNCTIONAL CATALASE-PEROXIDASE"/>
    <property type="match status" value="1"/>
</dbReference>
<dbReference type="Pfam" id="PF00141">
    <property type="entry name" value="peroxidase"/>
    <property type="match status" value="2"/>
</dbReference>
<dbReference type="PRINTS" id="PR00460">
    <property type="entry name" value="BPEROXIDASE"/>
</dbReference>
<dbReference type="PRINTS" id="PR00458">
    <property type="entry name" value="PEROXIDASE"/>
</dbReference>
<dbReference type="SUPFAM" id="SSF48113">
    <property type="entry name" value="Heme-dependent peroxidases"/>
    <property type="match status" value="2"/>
</dbReference>
<dbReference type="PROSITE" id="PS00435">
    <property type="entry name" value="PEROXIDASE_1"/>
    <property type="match status" value="1"/>
</dbReference>
<dbReference type="PROSITE" id="PS00436">
    <property type="entry name" value="PEROXIDASE_2"/>
    <property type="match status" value="1"/>
</dbReference>
<dbReference type="PROSITE" id="PS50873">
    <property type="entry name" value="PEROXIDASE_4"/>
    <property type="match status" value="1"/>
</dbReference>
<name>KATG1_BURCM</name>
<feature type="chain" id="PRO_0000354730" description="Catalase-peroxidase 1">
    <location>
        <begin position="1"/>
        <end position="728"/>
    </location>
</feature>
<feature type="active site" description="Proton acceptor" evidence="1">
    <location>
        <position position="92"/>
    </location>
</feature>
<feature type="binding site" description="axial binding residue" evidence="1">
    <location>
        <position position="259"/>
    </location>
    <ligand>
        <name>heme b</name>
        <dbReference type="ChEBI" id="CHEBI:60344"/>
    </ligand>
    <ligandPart>
        <name>Fe</name>
        <dbReference type="ChEBI" id="CHEBI:18248"/>
    </ligandPart>
</feature>
<feature type="site" description="Transition state stabilizer" evidence="1">
    <location>
        <position position="88"/>
    </location>
</feature>
<feature type="cross-link" description="Tryptophyl-tyrosyl-methioninium (Trp-Tyr) (with M-244)" evidence="1">
    <location>
        <begin position="91"/>
        <end position="218"/>
    </location>
</feature>
<feature type="cross-link" description="Tryptophyl-tyrosyl-methioninium (Tyr-Met) (with W-91)" evidence="1">
    <location>
        <begin position="218"/>
        <end position="244"/>
    </location>
</feature>
<reference key="1">
    <citation type="submission" date="2006-08" db="EMBL/GenBank/DDBJ databases">
        <title>Complete sequence of chromosome 1 of Burkholderia cepacia AMMD.</title>
        <authorList>
            <person name="Copeland A."/>
            <person name="Lucas S."/>
            <person name="Lapidus A."/>
            <person name="Barry K."/>
            <person name="Detter J.C."/>
            <person name="Glavina del Rio T."/>
            <person name="Hammon N."/>
            <person name="Israni S."/>
            <person name="Pitluck S."/>
            <person name="Bruce D."/>
            <person name="Chain P."/>
            <person name="Malfatti S."/>
            <person name="Shin M."/>
            <person name="Vergez L."/>
            <person name="Schmutz J."/>
            <person name="Larimer F."/>
            <person name="Land M."/>
            <person name="Hauser L."/>
            <person name="Kyrpides N."/>
            <person name="Kim E."/>
            <person name="Parke J."/>
            <person name="Coenye T."/>
            <person name="Konstantinidis K."/>
            <person name="Ramette A."/>
            <person name="Tiedje J."/>
            <person name="Richardson P."/>
        </authorList>
    </citation>
    <scope>NUCLEOTIDE SEQUENCE [LARGE SCALE GENOMIC DNA]</scope>
    <source>
        <strain>ATCC BAA-244 / DSM 16087 / CCUG 44356 / LMG 19182 / AMMD</strain>
    </source>
</reference>
<accession>Q0BI48</accession>
<sequence>MSTEAKCPFNHTAAGGTSNKDWWPNQLNLNILHRHSALSDPMDKDFDYAQAFKKLDLAAVKRDLQALMTTSQDWWPADFGHYGGLFVRMAWHSAGTYRIADGRGGAGGGQQRFAPLNSWPDNANLDKARRLLWPIKQKYGRNISWADLLILTGNVALESMGFKTFGYAGGRADTWEPDDVYWGSEKIWLELSGGPNSRYSGDRDLENPLAAVQMGLIYVNPEGPDGNPDPVAAARDIRDTFARMAMNDEETVALIAGGHTFGKTHGAGPATDVGPEPEAAGIELQGLGWKSAYASGKGHDAITSGLEVTWTSTPTKWSHDFFKHLFSYEWELTKSPAGAHQWVAKGADEVIPDAFDASKKHRPTMLTTDLSLRFDPAYEKISRRFYENPAEFADAFARAWFKLTHRDMGPRARYLGPEVPAEELLWQDPIPAVDHPLIDDADVAALKAKVLASGLSVAQLVSTAWASASTFRGSDKRGGANGARIRLAPQKDWEVNQPAALAAVLETLEGVRKAFNDAQTGGKKVSLADLIVLAGAAGVEQAAKSAGVAVTVPFAPGRMDASQEQTDVDAMAVLEPVADGFRNYLKSAYKTPAEALLVDKAQLLTLNGPELTVLVGGLRVLGANVGDAKHGVFTDRPGTLSNDFFVNLLDMGTEWKPVSAANDVFEGRDRATGQVKWTGTRVDLIFGSHSQLRALAEVYGSADANEKFVRDFVAAWNKVMNLDRFDLA</sequence>
<protein>
    <recommendedName>
        <fullName evidence="1">Catalase-peroxidase 1</fullName>
        <shortName evidence="1">CP 1</shortName>
        <ecNumber evidence="1">1.11.1.21</ecNumber>
    </recommendedName>
    <alternativeName>
        <fullName evidence="1">Peroxidase/catalase 1</fullName>
    </alternativeName>
</protein>
<evidence type="ECO:0000255" key="1">
    <source>
        <dbReference type="HAMAP-Rule" id="MF_01961"/>
    </source>
</evidence>
<comment type="function">
    <text evidence="1">Bifunctional enzyme with both catalase and broad-spectrum peroxidase activity.</text>
</comment>
<comment type="catalytic activity">
    <reaction evidence="1">
        <text>H2O2 + AH2 = A + 2 H2O</text>
        <dbReference type="Rhea" id="RHEA:30275"/>
        <dbReference type="ChEBI" id="CHEBI:13193"/>
        <dbReference type="ChEBI" id="CHEBI:15377"/>
        <dbReference type="ChEBI" id="CHEBI:16240"/>
        <dbReference type="ChEBI" id="CHEBI:17499"/>
        <dbReference type="EC" id="1.11.1.21"/>
    </reaction>
</comment>
<comment type="catalytic activity">
    <reaction evidence="1">
        <text>2 H2O2 = O2 + 2 H2O</text>
        <dbReference type="Rhea" id="RHEA:20309"/>
        <dbReference type="ChEBI" id="CHEBI:15377"/>
        <dbReference type="ChEBI" id="CHEBI:15379"/>
        <dbReference type="ChEBI" id="CHEBI:16240"/>
        <dbReference type="EC" id="1.11.1.21"/>
    </reaction>
</comment>
<comment type="cofactor">
    <cofactor evidence="1">
        <name>heme b</name>
        <dbReference type="ChEBI" id="CHEBI:60344"/>
    </cofactor>
    <text evidence="1">Binds 1 heme b (iron(II)-protoporphyrin IX) group per dimer.</text>
</comment>
<comment type="subunit">
    <text evidence="1">Homodimer or homotetramer.</text>
</comment>
<comment type="PTM">
    <text evidence="1">Formation of the three residue Trp-Tyr-Met cross-link is important for the catalase, but not the peroxidase activity of the enzyme.</text>
</comment>
<comment type="similarity">
    <text evidence="1">Belongs to the peroxidase family. Peroxidase/catalase subfamily.</text>
</comment>
<organism>
    <name type="scientific">Burkholderia ambifaria (strain ATCC BAA-244 / DSM 16087 / CCUG 44356 / LMG 19182 / AMMD)</name>
    <name type="common">Burkholderia cepacia (strain AMMD)</name>
    <dbReference type="NCBI Taxonomy" id="339670"/>
    <lineage>
        <taxon>Bacteria</taxon>
        <taxon>Pseudomonadati</taxon>
        <taxon>Pseudomonadota</taxon>
        <taxon>Betaproteobacteria</taxon>
        <taxon>Burkholderiales</taxon>
        <taxon>Burkholderiaceae</taxon>
        <taxon>Burkholderia</taxon>
        <taxon>Burkholderia cepacia complex</taxon>
    </lineage>
</organism>